<gene>
    <name type="ordered locus">LS215_1332</name>
</gene>
<protein>
    <recommendedName>
        <fullName evidence="2">Homocitrate synthase</fullName>
        <shortName evidence="2">HCS</shortName>
        <ecNumber evidence="1 2">2.3.3.14</ecNumber>
    </recommendedName>
</protein>
<organism>
    <name type="scientific">Saccharolobus islandicus (strain L.S.2.15 / Lassen #1)</name>
    <name type="common">Sulfolobus islandicus</name>
    <dbReference type="NCBI Taxonomy" id="429572"/>
    <lineage>
        <taxon>Archaea</taxon>
        <taxon>Thermoproteota</taxon>
        <taxon>Thermoprotei</taxon>
        <taxon>Sulfolobales</taxon>
        <taxon>Sulfolobaceae</taxon>
        <taxon>Saccharolobus</taxon>
    </lineage>
</organism>
<dbReference type="EC" id="2.3.3.14" evidence="1 2"/>
<dbReference type="EMBL" id="CP001399">
    <property type="protein sequence ID" value="ACP35340.1"/>
    <property type="molecule type" value="Genomic_DNA"/>
</dbReference>
<dbReference type="RefSeq" id="WP_012713650.1">
    <property type="nucleotide sequence ID" value="NC_012589.1"/>
</dbReference>
<dbReference type="SMR" id="C3MPM7"/>
<dbReference type="GeneID" id="7797848"/>
<dbReference type="KEGG" id="sis:LS215_1332"/>
<dbReference type="HOGENOM" id="CLU_022158_4_0_2"/>
<dbReference type="OrthoDB" id="6555at2157"/>
<dbReference type="UniPathway" id="UPA00033">
    <property type="reaction ID" value="UER00028"/>
</dbReference>
<dbReference type="Proteomes" id="UP000001747">
    <property type="component" value="Chromosome"/>
</dbReference>
<dbReference type="GO" id="GO:0003852">
    <property type="term" value="F:2-isopropylmalate synthase activity"/>
    <property type="evidence" value="ECO:0007669"/>
    <property type="project" value="TreeGrafter"/>
</dbReference>
<dbReference type="GO" id="GO:0004410">
    <property type="term" value="F:homocitrate synthase activity"/>
    <property type="evidence" value="ECO:0007669"/>
    <property type="project" value="UniProtKB-UniRule"/>
</dbReference>
<dbReference type="GO" id="GO:0046872">
    <property type="term" value="F:metal ion binding"/>
    <property type="evidence" value="ECO:0007669"/>
    <property type="project" value="UniProtKB-KW"/>
</dbReference>
<dbReference type="GO" id="GO:0009098">
    <property type="term" value="P:L-leucine biosynthetic process"/>
    <property type="evidence" value="ECO:0007669"/>
    <property type="project" value="TreeGrafter"/>
</dbReference>
<dbReference type="GO" id="GO:0019878">
    <property type="term" value="P:lysine biosynthetic process via aminoadipic acid"/>
    <property type="evidence" value="ECO:0007669"/>
    <property type="project" value="UniProtKB-UniRule"/>
</dbReference>
<dbReference type="CDD" id="cd07940">
    <property type="entry name" value="DRE_TIM_IPMS"/>
    <property type="match status" value="1"/>
</dbReference>
<dbReference type="Gene3D" id="1.10.238.260">
    <property type="match status" value="1"/>
</dbReference>
<dbReference type="Gene3D" id="3.30.70.920">
    <property type="match status" value="1"/>
</dbReference>
<dbReference type="Gene3D" id="3.20.20.70">
    <property type="entry name" value="Aldolase class I"/>
    <property type="match status" value="1"/>
</dbReference>
<dbReference type="HAMAP" id="MF_02222">
    <property type="entry name" value="Homocitr_synth_fung_arch"/>
    <property type="match status" value="1"/>
</dbReference>
<dbReference type="InterPro" id="IPR050073">
    <property type="entry name" value="2-IPM_HCS-like"/>
</dbReference>
<dbReference type="InterPro" id="IPR002034">
    <property type="entry name" value="AIPM/Hcit_synth_CS"/>
</dbReference>
<dbReference type="InterPro" id="IPR013785">
    <property type="entry name" value="Aldolase_TIM"/>
</dbReference>
<dbReference type="InterPro" id="IPR011008">
    <property type="entry name" value="Dimeric_a/b-barrel"/>
</dbReference>
<dbReference type="InterPro" id="IPR011872">
    <property type="entry name" value="Homocitrate_synth"/>
</dbReference>
<dbReference type="InterPro" id="IPR054691">
    <property type="entry name" value="LeuA/HCS_post-cat"/>
</dbReference>
<dbReference type="InterPro" id="IPR000891">
    <property type="entry name" value="PYR_CT"/>
</dbReference>
<dbReference type="InterPro" id="IPR019887">
    <property type="entry name" value="Tscrpt_reg_AsnC/Lrp_C"/>
</dbReference>
<dbReference type="NCBIfam" id="TIGR02146">
    <property type="entry name" value="LysS_fung_arch"/>
    <property type="match status" value="1"/>
</dbReference>
<dbReference type="NCBIfam" id="NF002085">
    <property type="entry name" value="PRK00915.1-2"/>
    <property type="match status" value="1"/>
</dbReference>
<dbReference type="PANTHER" id="PTHR10277:SF63">
    <property type="entry name" value="HOMOCITRATE SYNTHASE"/>
    <property type="match status" value="1"/>
</dbReference>
<dbReference type="PANTHER" id="PTHR10277">
    <property type="entry name" value="HOMOCITRATE SYNTHASE-RELATED"/>
    <property type="match status" value="1"/>
</dbReference>
<dbReference type="Pfam" id="PF01037">
    <property type="entry name" value="AsnC_trans_reg"/>
    <property type="match status" value="1"/>
</dbReference>
<dbReference type="Pfam" id="PF22617">
    <property type="entry name" value="HCS_D2"/>
    <property type="match status" value="1"/>
</dbReference>
<dbReference type="Pfam" id="PF00682">
    <property type="entry name" value="HMGL-like"/>
    <property type="match status" value="1"/>
</dbReference>
<dbReference type="SUPFAM" id="SSF51569">
    <property type="entry name" value="Aldolase"/>
    <property type="match status" value="1"/>
</dbReference>
<dbReference type="SUPFAM" id="SSF54909">
    <property type="entry name" value="Dimeric alpha+beta barrel"/>
    <property type="match status" value="1"/>
</dbReference>
<dbReference type="PROSITE" id="PS00816">
    <property type="entry name" value="AIPM_HOMOCIT_SYNTH_2"/>
    <property type="match status" value="1"/>
</dbReference>
<dbReference type="PROSITE" id="PS50991">
    <property type="entry name" value="PYR_CT"/>
    <property type="match status" value="1"/>
</dbReference>
<accession>C3MPM7</accession>
<keyword id="KW-0028">Amino-acid biosynthesis</keyword>
<keyword id="KW-0457">Lysine biosynthesis</keyword>
<keyword id="KW-0460">Magnesium</keyword>
<keyword id="KW-0464">Manganese</keyword>
<keyword id="KW-0479">Metal-binding</keyword>
<keyword id="KW-0808">Transferase</keyword>
<sequence>MIKVGILDSTLREGEQTPGVIFTVDQRVEIAKALSDLGVSMIEAGHPAVSPDIYEGIKRIVKLKKEGIITSEIVGHSRAVKRDIEIAAELEVNRIAIFYGVSDLHLKAKHKATREEALRTIAETISYAKNHGVKVRFTAEDGSRTDFDFLVTVSKTARDAGADRVSIADTVGILYPSKTKELFSALTREVPNLEFDIHAHNDLGLAVANALAAIEGGATIIHATVNGLGERVGIVPLQQIAAAIKYHFGIEVVKLDKLQYVSSLVEKYSGIPMPPNYPITGDYAFLHKAGVHVAGVLNDPRTYEFMPPETFGRTRDYTIDKYTGKHALRDKYEKLGVKISDAEMDQILAKIKSNTTIRFYRDVDLLELAEEVTGRVLKPRPPEQIEALISVKCDSNVYTTSVTRRLSVINGVKEVMEISGDYDILVKVQAKDSNELNQIIESIRATKGVRSTLTSLVLKKM</sequence>
<comment type="function">
    <text evidence="1">Catalyzes the aldol-type condensation of 2-oxoglutarate with acetyl-CoA to yield homocitrate. Carries out the first step of the alpha-aminoadipate (AAA) lysine biosynthesis pathway.</text>
</comment>
<comment type="catalytic activity">
    <reaction evidence="1">
        <text>acetyl-CoA + 2-oxoglutarate + H2O = (2R)-homocitrate + CoA + H(+)</text>
        <dbReference type="Rhea" id="RHEA:12929"/>
        <dbReference type="ChEBI" id="CHEBI:15377"/>
        <dbReference type="ChEBI" id="CHEBI:15378"/>
        <dbReference type="ChEBI" id="CHEBI:16810"/>
        <dbReference type="ChEBI" id="CHEBI:57287"/>
        <dbReference type="ChEBI" id="CHEBI:57288"/>
        <dbReference type="ChEBI" id="CHEBI:58884"/>
        <dbReference type="EC" id="2.3.3.14"/>
    </reaction>
    <physiologicalReaction direction="left-to-right" evidence="1">
        <dbReference type="Rhea" id="RHEA:12930"/>
    </physiologicalReaction>
</comment>
<comment type="cofactor">
    <cofactor evidence="1">
        <name>Mg(2+)</name>
        <dbReference type="ChEBI" id="CHEBI:18420"/>
    </cofactor>
    <cofactor evidence="1">
        <name>Mn(2+)</name>
        <dbReference type="ChEBI" id="CHEBI:29035"/>
    </cofactor>
</comment>
<comment type="pathway">
    <text evidence="1">Amino-acid biosynthesis; L-lysine biosynthesis via AAA pathway; L-alpha-aminoadipate from 2-oxoglutarate: step 1/5.</text>
</comment>
<comment type="similarity">
    <text evidence="2">Belongs to the alpha-IPM synthase/homocitrate synthase family. Homocitrate synthase LYS20/LYS21 subfamily.</text>
</comment>
<evidence type="ECO:0000250" key="1">
    <source>
        <dbReference type="UniProtKB" id="O87198"/>
    </source>
</evidence>
<evidence type="ECO:0000255" key="2">
    <source>
        <dbReference type="HAMAP-Rule" id="MF_02222"/>
    </source>
</evidence>
<evidence type="ECO:0000255" key="3">
    <source>
        <dbReference type="PROSITE-ProRule" id="PRU01151"/>
    </source>
</evidence>
<feature type="chain" id="PRO_1000213319" description="Homocitrate synthase">
    <location>
        <begin position="1"/>
        <end position="461"/>
    </location>
</feature>
<feature type="domain" description="Pyruvate carboxyltransferase" evidence="3">
    <location>
        <begin position="4"/>
        <end position="259"/>
    </location>
</feature>
<feature type="active site" description="Proton acceptor" evidence="1">
    <location>
        <position position="292"/>
    </location>
</feature>
<feature type="binding site" evidence="1">
    <location>
        <position position="12"/>
    </location>
    <ligand>
        <name>2-oxoglutarate</name>
        <dbReference type="ChEBI" id="CHEBI:16810"/>
    </ligand>
</feature>
<feature type="binding site" evidence="1">
    <location>
        <position position="13"/>
    </location>
    <ligand>
        <name>Mg(2+)</name>
        <dbReference type="ChEBI" id="CHEBI:18420"/>
    </ligand>
</feature>
<feature type="binding site" evidence="1">
    <location>
        <position position="76"/>
    </location>
    <ligand>
        <name>2-oxoglutarate</name>
        <dbReference type="ChEBI" id="CHEBI:16810"/>
    </ligand>
</feature>
<feature type="binding site" evidence="1">
    <location>
        <position position="136"/>
    </location>
    <ligand>
        <name>2-oxoglutarate</name>
        <dbReference type="ChEBI" id="CHEBI:16810"/>
    </ligand>
</feature>
<feature type="binding site" evidence="1">
    <location>
        <position position="170"/>
    </location>
    <ligand>
        <name>2-oxoglutarate</name>
        <dbReference type="ChEBI" id="CHEBI:16810"/>
    </ligand>
</feature>
<feature type="binding site" evidence="1">
    <location>
        <position position="198"/>
    </location>
    <ligand>
        <name>Mg(2+)</name>
        <dbReference type="ChEBI" id="CHEBI:18420"/>
    </ligand>
</feature>
<feature type="binding site" evidence="1">
    <location>
        <position position="200"/>
    </location>
    <ligand>
        <name>Mg(2+)</name>
        <dbReference type="ChEBI" id="CHEBI:18420"/>
    </ligand>
</feature>
<reference key="1">
    <citation type="journal article" date="2009" name="Proc. Natl. Acad. Sci. U.S.A.">
        <title>Biogeography of the Sulfolobus islandicus pan-genome.</title>
        <authorList>
            <person name="Reno M.L."/>
            <person name="Held N.L."/>
            <person name="Fields C.J."/>
            <person name="Burke P.V."/>
            <person name="Whitaker R.J."/>
        </authorList>
    </citation>
    <scope>NUCLEOTIDE SEQUENCE [LARGE SCALE GENOMIC DNA]</scope>
    <source>
        <strain>L.S.2.15 / Lassen #1</strain>
    </source>
</reference>
<proteinExistence type="inferred from homology"/>
<name>HOSA_SACI2</name>